<accession>Q216H0</accession>
<gene>
    <name evidence="1" type="primary">thiC</name>
    <name type="ordered locus">RPC_2162</name>
</gene>
<feature type="chain" id="PRO_0000242296" description="Phosphomethylpyrimidine synthase">
    <location>
        <begin position="1"/>
        <end position="709"/>
    </location>
</feature>
<feature type="region of interest" description="Disordered" evidence="2">
    <location>
        <begin position="1"/>
        <end position="21"/>
    </location>
</feature>
<feature type="region of interest" description="Disordered" evidence="2">
    <location>
        <begin position="125"/>
        <end position="168"/>
    </location>
</feature>
<feature type="compositionally biased region" description="Polar residues" evidence="2">
    <location>
        <begin position="1"/>
        <end position="13"/>
    </location>
</feature>
<feature type="binding site" evidence="1">
    <location>
        <position position="274"/>
    </location>
    <ligand>
        <name>substrate</name>
    </ligand>
</feature>
<feature type="binding site" evidence="1">
    <location>
        <position position="303"/>
    </location>
    <ligand>
        <name>substrate</name>
    </ligand>
</feature>
<feature type="binding site" evidence="1">
    <location>
        <position position="332"/>
    </location>
    <ligand>
        <name>substrate</name>
    </ligand>
</feature>
<feature type="binding site" evidence="1">
    <location>
        <position position="368"/>
    </location>
    <ligand>
        <name>substrate</name>
    </ligand>
</feature>
<feature type="binding site" evidence="1">
    <location>
        <begin position="388"/>
        <end position="390"/>
    </location>
    <ligand>
        <name>substrate</name>
    </ligand>
</feature>
<feature type="binding site" evidence="1">
    <location>
        <begin position="429"/>
        <end position="432"/>
    </location>
    <ligand>
        <name>substrate</name>
    </ligand>
</feature>
<feature type="binding site" evidence="1">
    <location>
        <position position="468"/>
    </location>
    <ligand>
        <name>substrate</name>
    </ligand>
</feature>
<feature type="binding site" evidence="1">
    <location>
        <position position="472"/>
    </location>
    <ligand>
        <name>Zn(2+)</name>
        <dbReference type="ChEBI" id="CHEBI:29105"/>
    </ligand>
</feature>
<feature type="binding site" evidence="1">
    <location>
        <position position="495"/>
    </location>
    <ligand>
        <name>substrate</name>
    </ligand>
</feature>
<feature type="binding site" evidence="1">
    <location>
        <position position="536"/>
    </location>
    <ligand>
        <name>Zn(2+)</name>
        <dbReference type="ChEBI" id="CHEBI:29105"/>
    </ligand>
</feature>
<feature type="binding site" evidence="1">
    <location>
        <position position="616"/>
    </location>
    <ligand>
        <name>[4Fe-4S] cluster</name>
        <dbReference type="ChEBI" id="CHEBI:49883"/>
        <note>4Fe-4S-S-AdoMet</note>
    </ligand>
</feature>
<feature type="binding site" evidence="1">
    <location>
        <position position="619"/>
    </location>
    <ligand>
        <name>[4Fe-4S] cluster</name>
        <dbReference type="ChEBI" id="CHEBI:49883"/>
        <note>4Fe-4S-S-AdoMet</note>
    </ligand>
</feature>
<feature type="binding site" evidence="1">
    <location>
        <position position="624"/>
    </location>
    <ligand>
        <name>[4Fe-4S] cluster</name>
        <dbReference type="ChEBI" id="CHEBI:49883"/>
        <note>4Fe-4S-S-AdoMet</note>
    </ligand>
</feature>
<name>THIC_RHOPB</name>
<evidence type="ECO:0000255" key="1">
    <source>
        <dbReference type="HAMAP-Rule" id="MF_00089"/>
    </source>
</evidence>
<evidence type="ECO:0000256" key="2">
    <source>
        <dbReference type="SAM" id="MobiDB-lite"/>
    </source>
</evidence>
<keyword id="KW-0004">4Fe-4S</keyword>
<keyword id="KW-0408">Iron</keyword>
<keyword id="KW-0411">Iron-sulfur</keyword>
<keyword id="KW-0456">Lyase</keyword>
<keyword id="KW-0479">Metal-binding</keyword>
<keyword id="KW-0949">S-adenosyl-L-methionine</keyword>
<keyword id="KW-0784">Thiamine biosynthesis</keyword>
<keyword id="KW-0862">Zinc</keyword>
<dbReference type="EC" id="4.1.99.17" evidence="1"/>
<dbReference type="EMBL" id="CP000301">
    <property type="protein sequence ID" value="ABD87716.1"/>
    <property type="molecule type" value="Genomic_DNA"/>
</dbReference>
<dbReference type="SMR" id="Q216H0"/>
<dbReference type="STRING" id="316056.RPC_2162"/>
<dbReference type="KEGG" id="rpc:RPC_2162"/>
<dbReference type="eggNOG" id="COG0422">
    <property type="taxonomic scope" value="Bacteria"/>
</dbReference>
<dbReference type="HOGENOM" id="CLU_013181_2_1_5"/>
<dbReference type="OrthoDB" id="9805897at2"/>
<dbReference type="UniPathway" id="UPA00060"/>
<dbReference type="GO" id="GO:0005829">
    <property type="term" value="C:cytosol"/>
    <property type="evidence" value="ECO:0007669"/>
    <property type="project" value="TreeGrafter"/>
</dbReference>
<dbReference type="GO" id="GO:0051539">
    <property type="term" value="F:4 iron, 4 sulfur cluster binding"/>
    <property type="evidence" value="ECO:0007669"/>
    <property type="project" value="UniProtKB-KW"/>
</dbReference>
<dbReference type="GO" id="GO:0016830">
    <property type="term" value="F:carbon-carbon lyase activity"/>
    <property type="evidence" value="ECO:0007669"/>
    <property type="project" value="InterPro"/>
</dbReference>
<dbReference type="GO" id="GO:0008270">
    <property type="term" value="F:zinc ion binding"/>
    <property type="evidence" value="ECO:0007669"/>
    <property type="project" value="UniProtKB-UniRule"/>
</dbReference>
<dbReference type="GO" id="GO:0009228">
    <property type="term" value="P:thiamine biosynthetic process"/>
    <property type="evidence" value="ECO:0007669"/>
    <property type="project" value="UniProtKB-KW"/>
</dbReference>
<dbReference type="GO" id="GO:0009229">
    <property type="term" value="P:thiamine diphosphate biosynthetic process"/>
    <property type="evidence" value="ECO:0007669"/>
    <property type="project" value="UniProtKB-UniRule"/>
</dbReference>
<dbReference type="FunFam" id="3.20.20.540:FF:000001">
    <property type="entry name" value="Phosphomethylpyrimidine synthase"/>
    <property type="match status" value="1"/>
</dbReference>
<dbReference type="Gene3D" id="6.10.250.620">
    <property type="match status" value="1"/>
</dbReference>
<dbReference type="Gene3D" id="3.20.20.540">
    <property type="entry name" value="Radical SAM ThiC family, central domain"/>
    <property type="match status" value="1"/>
</dbReference>
<dbReference type="HAMAP" id="MF_00089">
    <property type="entry name" value="ThiC"/>
    <property type="match status" value="1"/>
</dbReference>
<dbReference type="InterPro" id="IPR037509">
    <property type="entry name" value="ThiC"/>
</dbReference>
<dbReference type="InterPro" id="IPR025747">
    <property type="entry name" value="ThiC-associated_dom"/>
</dbReference>
<dbReference type="InterPro" id="IPR038521">
    <property type="entry name" value="ThiC/Bza_core_dom"/>
</dbReference>
<dbReference type="InterPro" id="IPR002817">
    <property type="entry name" value="ThiC/BzaA/B"/>
</dbReference>
<dbReference type="NCBIfam" id="NF006763">
    <property type="entry name" value="PRK09284.1"/>
    <property type="match status" value="1"/>
</dbReference>
<dbReference type="NCBIfam" id="NF009895">
    <property type="entry name" value="PRK13352.1"/>
    <property type="match status" value="1"/>
</dbReference>
<dbReference type="NCBIfam" id="TIGR00190">
    <property type="entry name" value="thiC"/>
    <property type="match status" value="1"/>
</dbReference>
<dbReference type="PANTHER" id="PTHR30557:SF1">
    <property type="entry name" value="PHOSPHOMETHYLPYRIMIDINE SYNTHASE, CHLOROPLASTIC"/>
    <property type="match status" value="1"/>
</dbReference>
<dbReference type="PANTHER" id="PTHR30557">
    <property type="entry name" value="THIAMINE BIOSYNTHESIS PROTEIN THIC"/>
    <property type="match status" value="1"/>
</dbReference>
<dbReference type="Pfam" id="PF13667">
    <property type="entry name" value="ThiC-associated"/>
    <property type="match status" value="1"/>
</dbReference>
<dbReference type="Pfam" id="PF01964">
    <property type="entry name" value="ThiC_Rad_SAM"/>
    <property type="match status" value="1"/>
</dbReference>
<dbReference type="SFLD" id="SFLDF00407">
    <property type="entry name" value="phosphomethylpyrimidine_syntha"/>
    <property type="match status" value="1"/>
</dbReference>
<dbReference type="SFLD" id="SFLDG01114">
    <property type="entry name" value="phosphomethylpyrimidine_syntha"/>
    <property type="match status" value="1"/>
</dbReference>
<dbReference type="SFLD" id="SFLDS00113">
    <property type="entry name" value="Radical_SAM_Phosphomethylpyrim"/>
    <property type="match status" value="1"/>
</dbReference>
<proteinExistence type="inferred from homology"/>
<organism>
    <name type="scientific">Rhodopseudomonas palustris (strain BisB18)</name>
    <dbReference type="NCBI Taxonomy" id="316056"/>
    <lineage>
        <taxon>Bacteria</taxon>
        <taxon>Pseudomonadati</taxon>
        <taxon>Pseudomonadota</taxon>
        <taxon>Alphaproteobacteria</taxon>
        <taxon>Hyphomicrobiales</taxon>
        <taxon>Nitrobacteraceae</taxon>
        <taxon>Rhodopseudomonas</taxon>
    </lineage>
</organism>
<reference key="1">
    <citation type="submission" date="2006-03" db="EMBL/GenBank/DDBJ databases">
        <title>Complete sequence of Rhodopseudomonas palustris BisB18.</title>
        <authorList>
            <consortium name="US DOE Joint Genome Institute"/>
            <person name="Copeland A."/>
            <person name="Lucas S."/>
            <person name="Lapidus A."/>
            <person name="Barry K."/>
            <person name="Detter J.C."/>
            <person name="Glavina del Rio T."/>
            <person name="Hammon N."/>
            <person name="Israni S."/>
            <person name="Dalin E."/>
            <person name="Tice H."/>
            <person name="Pitluck S."/>
            <person name="Chain P."/>
            <person name="Malfatti S."/>
            <person name="Shin M."/>
            <person name="Vergez L."/>
            <person name="Schmutz J."/>
            <person name="Larimer F."/>
            <person name="Land M."/>
            <person name="Hauser L."/>
            <person name="Pelletier D.A."/>
            <person name="Kyrpides N."/>
            <person name="Anderson I."/>
            <person name="Oda Y."/>
            <person name="Harwood C.S."/>
            <person name="Richardson P."/>
        </authorList>
    </citation>
    <scope>NUCLEOTIDE SEQUENCE [LARGE SCALE GENOMIC DNA]</scope>
    <source>
        <strain>BisB18</strain>
    </source>
</reference>
<comment type="function">
    <text evidence="1">Catalyzes the synthesis of the hydroxymethylpyrimidine phosphate (HMP-P) moiety of thiamine from aminoimidazole ribotide (AIR) in a radical S-adenosyl-L-methionine (SAM)-dependent reaction.</text>
</comment>
<comment type="catalytic activity">
    <reaction evidence="1">
        <text>5-amino-1-(5-phospho-beta-D-ribosyl)imidazole + S-adenosyl-L-methionine = 4-amino-2-methyl-5-(phosphooxymethyl)pyrimidine + CO + 5'-deoxyadenosine + formate + L-methionine + 3 H(+)</text>
        <dbReference type="Rhea" id="RHEA:24840"/>
        <dbReference type="ChEBI" id="CHEBI:15378"/>
        <dbReference type="ChEBI" id="CHEBI:15740"/>
        <dbReference type="ChEBI" id="CHEBI:17245"/>
        <dbReference type="ChEBI" id="CHEBI:17319"/>
        <dbReference type="ChEBI" id="CHEBI:57844"/>
        <dbReference type="ChEBI" id="CHEBI:58354"/>
        <dbReference type="ChEBI" id="CHEBI:59789"/>
        <dbReference type="ChEBI" id="CHEBI:137981"/>
        <dbReference type="EC" id="4.1.99.17"/>
    </reaction>
</comment>
<comment type="cofactor">
    <cofactor evidence="1">
        <name>[4Fe-4S] cluster</name>
        <dbReference type="ChEBI" id="CHEBI:49883"/>
    </cofactor>
    <text evidence="1">Binds 1 [4Fe-4S] cluster per subunit. The cluster is coordinated with 3 cysteines and an exchangeable S-adenosyl-L-methionine.</text>
</comment>
<comment type="pathway">
    <text evidence="1">Cofactor biosynthesis; thiamine diphosphate biosynthesis.</text>
</comment>
<comment type="subunit">
    <text evidence="1">Homodimer.</text>
</comment>
<comment type="similarity">
    <text evidence="1">Belongs to the ThiC family.</text>
</comment>
<sequence length="709" mass="76662">MNIRSNPDTTLPAVTTGPLPSSRKIFATPDEAPELRVPLREIILSDGAGEPNLPVYDTTGPYTDPSVTIDVNAGLSRIRTAWVKERGGVEEYQGRDVKPEDNGNVGAAHAAKSFTAYHKPLRGLDAPAAGTANSPPPRGEGSGVGGATNTVPSSTPLPTPPPQGGREQGIAYACGPHLPPMVTQLEFARAGIITKEMIYVATRENLGRKQQLARAEAALADGESFGASVPAFVTPEFVRSEIARGRAIIPANINHGELEPMIIGRNFLTKINANIGNSAVTSSVEEEVDKMVWAIRWGADTVMDLSTGRNIHTTREWILRNAPIPIGTVPIYQALEKCEGDPVKLTWELYRDTLVEQCEQGVDYFTIHAGVRLAYIHLTANRTTGIVSRGGSIMAKWCLAHHQESFLYTHFDEICDLMRKYDVSFSLGDGLRPGSIADANDRAQFAELETLGELTKIAWDKGCQVMIEGPGHVPLHKIKINMDKQLKECGEAPFYTLGPLTTDIAPGYDHITSGIGAAMIGWFGCAMLCYVTPKEHLGLPDRNDVKVGVITYKIAAHASDLAKGHPAAQLRDDALSRARFDFRWQDQFNLGLDPDTAQAFHDETLPKDAHKVAHFCSMCGPKFCSMKITQDVRDYAAGLGDNEKAALNLAGGSSLGSVGMSISGKLEDGLPADAFAKAGMAEMSEKFRTMGEQLYLDAEKVKESNKALS</sequence>
<protein>
    <recommendedName>
        <fullName evidence="1">Phosphomethylpyrimidine synthase</fullName>
        <ecNumber evidence="1">4.1.99.17</ecNumber>
    </recommendedName>
    <alternativeName>
        <fullName evidence="1">Hydroxymethylpyrimidine phosphate synthase</fullName>
        <shortName evidence="1">HMP-P synthase</shortName>
        <shortName evidence="1">HMP-phosphate synthase</shortName>
        <shortName evidence="1">HMPP synthase</shortName>
    </alternativeName>
    <alternativeName>
        <fullName evidence="1">Thiamine biosynthesis protein ThiC</fullName>
    </alternativeName>
</protein>